<protein>
    <recommendedName>
        <fullName evidence="1">PF03932 family protein CutC</fullName>
    </recommendedName>
</protein>
<feature type="chain" id="PRO_1000062258" description="PF03932 family protein CutC">
    <location>
        <begin position="1"/>
        <end position="252"/>
    </location>
</feature>
<sequence length="252" mass="27384">MIKLEVCCYSVDCALTAERAGADRIELCASPSEGGLTPSYGSLRLARDRVSVPVHPIIRPRGGDFCYGAVDFDVIKHDIAQIRDMGFAGVVVGMLDEEGHIDLQRMREVMRLSGNMAVTFHRAFDMCQNPMVALSQLTQLGVARILTSGQQQNAELGLPLLRDLLQASQGPVIMAGAGVRLSNLHKFVDIGIQELHSSSGHAVPSTMRYRKAGVTMCSDSEFDEFSHYCVDGEMVEAMKNSLALVDPLVQSA</sequence>
<gene>
    <name evidence="1" type="primary">cutC</name>
    <name type="ordered locus">Spro_2788</name>
</gene>
<accession>A8GFJ9</accession>
<comment type="subcellular location">
    <subcellularLocation>
        <location evidence="1">Cytoplasm</location>
    </subcellularLocation>
</comment>
<comment type="similarity">
    <text evidence="1">Belongs to the CutC family.</text>
</comment>
<comment type="caution">
    <text evidence="1">Once thought to be involved in copper homeostasis, experiments in E.coli have shown this is not the case.</text>
</comment>
<proteinExistence type="inferred from homology"/>
<dbReference type="EMBL" id="CP000826">
    <property type="protein sequence ID" value="ABV41889.1"/>
    <property type="molecule type" value="Genomic_DNA"/>
</dbReference>
<dbReference type="SMR" id="A8GFJ9"/>
<dbReference type="STRING" id="399741.Spro_2788"/>
<dbReference type="KEGG" id="spe:Spro_2788"/>
<dbReference type="eggNOG" id="COG3142">
    <property type="taxonomic scope" value="Bacteria"/>
</dbReference>
<dbReference type="HOGENOM" id="CLU_050555_3_1_6"/>
<dbReference type="OrthoDB" id="9815677at2"/>
<dbReference type="GO" id="GO:0005737">
    <property type="term" value="C:cytoplasm"/>
    <property type="evidence" value="ECO:0007669"/>
    <property type="project" value="UniProtKB-SubCell"/>
</dbReference>
<dbReference type="GO" id="GO:0005507">
    <property type="term" value="F:copper ion binding"/>
    <property type="evidence" value="ECO:0007669"/>
    <property type="project" value="TreeGrafter"/>
</dbReference>
<dbReference type="FunFam" id="3.20.20.380:FF:000001">
    <property type="entry name" value="Copper homeostasis protein CutC"/>
    <property type="match status" value="1"/>
</dbReference>
<dbReference type="Gene3D" id="3.20.20.380">
    <property type="entry name" value="Copper homeostasis (CutC) domain"/>
    <property type="match status" value="1"/>
</dbReference>
<dbReference type="HAMAP" id="MF_00795">
    <property type="entry name" value="CutC"/>
    <property type="match status" value="1"/>
</dbReference>
<dbReference type="InterPro" id="IPR005627">
    <property type="entry name" value="CutC-like"/>
</dbReference>
<dbReference type="InterPro" id="IPR036822">
    <property type="entry name" value="CutC-like_dom_sf"/>
</dbReference>
<dbReference type="NCBIfam" id="NF008603">
    <property type="entry name" value="PRK11572.1"/>
    <property type="match status" value="1"/>
</dbReference>
<dbReference type="PANTHER" id="PTHR12598">
    <property type="entry name" value="COPPER HOMEOSTASIS PROTEIN CUTC"/>
    <property type="match status" value="1"/>
</dbReference>
<dbReference type="PANTHER" id="PTHR12598:SF0">
    <property type="entry name" value="COPPER HOMEOSTASIS PROTEIN CUTC HOMOLOG"/>
    <property type="match status" value="1"/>
</dbReference>
<dbReference type="Pfam" id="PF03932">
    <property type="entry name" value="CutC"/>
    <property type="match status" value="1"/>
</dbReference>
<dbReference type="SUPFAM" id="SSF110395">
    <property type="entry name" value="CutC-like"/>
    <property type="match status" value="1"/>
</dbReference>
<keyword id="KW-0963">Cytoplasm</keyword>
<organism>
    <name type="scientific">Serratia proteamaculans (strain 568)</name>
    <dbReference type="NCBI Taxonomy" id="399741"/>
    <lineage>
        <taxon>Bacteria</taxon>
        <taxon>Pseudomonadati</taxon>
        <taxon>Pseudomonadota</taxon>
        <taxon>Gammaproteobacteria</taxon>
        <taxon>Enterobacterales</taxon>
        <taxon>Yersiniaceae</taxon>
        <taxon>Serratia</taxon>
    </lineage>
</organism>
<name>CUTC_SERP5</name>
<evidence type="ECO:0000255" key="1">
    <source>
        <dbReference type="HAMAP-Rule" id="MF_00795"/>
    </source>
</evidence>
<reference key="1">
    <citation type="submission" date="2007-09" db="EMBL/GenBank/DDBJ databases">
        <title>Complete sequence of chromosome of Serratia proteamaculans 568.</title>
        <authorList>
            <consortium name="US DOE Joint Genome Institute"/>
            <person name="Copeland A."/>
            <person name="Lucas S."/>
            <person name="Lapidus A."/>
            <person name="Barry K."/>
            <person name="Glavina del Rio T."/>
            <person name="Dalin E."/>
            <person name="Tice H."/>
            <person name="Pitluck S."/>
            <person name="Chain P."/>
            <person name="Malfatti S."/>
            <person name="Shin M."/>
            <person name="Vergez L."/>
            <person name="Schmutz J."/>
            <person name="Larimer F."/>
            <person name="Land M."/>
            <person name="Hauser L."/>
            <person name="Kyrpides N."/>
            <person name="Kim E."/>
            <person name="Taghavi S."/>
            <person name="Newman L."/>
            <person name="Vangronsveld J."/>
            <person name="van der Lelie D."/>
            <person name="Richardson P."/>
        </authorList>
    </citation>
    <scope>NUCLEOTIDE SEQUENCE [LARGE SCALE GENOMIC DNA]</scope>
    <source>
        <strain>568</strain>
    </source>
</reference>